<evidence type="ECO:0000250" key="1"/>
<evidence type="ECO:0000250" key="2">
    <source>
        <dbReference type="UniProtKB" id="P14416"/>
    </source>
</evidence>
<evidence type="ECO:0000250" key="3">
    <source>
        <dbReference type="UniProtKB" id="P61168"/>
    </source>
</evidence>
<evidence type="ECO:0000250" key="4">
    <source>
        <dbReference type="UniProtKB" id="P61169"/>
    </source>
</evidence>
<evidence type="ECO:0000255" key="5"/>
<evidence type="ECO:0000255" key="6">
    <source>
        <dbReference type="PROSITE-ProRule" id="PRU00521"/>
    </source>
</evidence>
<evidence type="ECO:0000256" key="7">
    <source>
        <dbReference type="SAM" id="MobiDB-lite"/>
    </source>
</evidence>
<evidence type="ECO:0000303" key="8">
    <source>
    </source>
</evidence>
<organism>
    <name type="scientific">Bos taurus</name>
    <name type="common">Bovine</name>
    <dbReference type="NCBI Taxonomy" id="9913"/>
    <lineage>
        <taxon>Eukaryota</taxon>
        <taxon>Metazoa</taxon>
        <taxon>Chordata</taxon>
        <taxon>Craniata</taxon>
        <taxon>Vertebrata</taxon>
        <taxon>Euteleostomi</taxon>
        <taxon>Mammalia</taxon>
        <taxon>Eutheria</taxon>
        <taxon>Laurasiatheria</taxon>
        <taxon>Artiodactyla</taxon>
        <taxon>Ruminantia</taxon>
        <taxon>Pecora</taxon>
        <taxon>Bovidae</taxon>
        <taxon>Bovinae</taxon>
        <taxon>Bos</taxon>
    </lineage>
</organism>
<comment type="function">
    <text evidence="2 3">Dopamine receptor whose activity is mediated by G proteins which inhibit adenylyl cyclase (By similarity). Positively regulates postnatal regression of retinal hyaloid vessels via suppression of VEGFR2/KDR activity, downstream of OPN5 (By similarity).</text>
</comment>
<comment type="subunit">
    <text evidence="2 3 4">Forms homo- and heterooligomers with DRD4 (By similarity). The interaction with DRD4 may modulate agonist-induced downstream signaling (By similarity). Interacts with CADPS and CADPS2 (By similarity). Interacts with GPRASP1, PPP1R9B and CLIC6 (By similarity). Interacts with ARRB2 (By similarity). Interacts with HTR2A (By similarity). Interacts with DRD1 (By similarity). Interacts with KCNA2 (By similarity).</text>
</comment>
<comment type="subcellular location">
    <subcellularLocation>
        <location evidence="2">Cell membrane</location>
        <topology evidence="5">Multi-pass membrane protein</topology>
    </subcellularLocation>
    <subcellularLocation>
        <location evidence="2">Golgi apparatus membrane</location>
        <topology evidence="5">Multi-pass membrane protein</topology>
    </subcellularLocation>
</comment>
<comment type="alternative products">
    <event type="alternative splicing"/>
    <isoform>
        <id>P20288-1</id>
        <name>Long</name>
        <sequence type="displayed"/>
    </isoform>
    <isoform>
        <id>P20288-2</id>
        <name>Short</name>
        <sequence type="described" ref="VSP_001869"/>
    </isoform>
</comment>
<comment type="PTM">
    <text evidence="2">Palmitoylated. Palmitoylation which is required for proper localization to the plasma membrane and stability of the receptor could be carried on by ZDHHC4, ZDHHC3 and ZDHHC8.</text>
</comment>
<comment type="similarity">
    <text evidence="6">Belongs to the G-protein coupled receptor 1 family.</text>
</comment>
<protein>
    <recommendedName>
        <fullName>D(2) dopamine receptor</fullName>
    </recommendedName>
    <alternativeName>
        <fullName>Dopamine D2 receptor</fullName>
    </alternativeName>
</protein>
<dbReference type="EMBL" id="X51657">
    <property type="protein sequence ID" value="CAA35970.1"/>
    <property type="molecule type" value="mRNA"/>
</dbReference>
<dbReference type="PIR" id="S08163">
    <property type="entry name" value="DYBOD2"/>
</dbReference>
<dbReference type="RefSeq" id="NP_776468.1">
    <property type="nucleotide sequence ID" value="NM_174043.2"/>
</dbReference>
<dbReference type="SMR" id="P20288"/>
<dbReference type="FunCoup" id="P20288">
    <property type="interactions" value="471"/>
</dbReference>
<dbReference type="STRING" id="9913.ENSBTAP00000014422"/>
<dbReference type="BindingDB" id="P20288"/>
<dbReference type="ChEMBL" id="CHEMBL3998"/>
<dbReference type="DrugCentral" id="P20288"/>
<dbReference type="GlyCosmos" id="P20288">
    <property type="glycosylation" value="3 sites, No reported glycans"/>
</dbReference>
<dbReference type="GlyGen" id="P20288">
    <property type="glycosylation" value="3 sites"/>
</dbReference>
<dbReference type="PaxDb" id="9913-ENSBTAP00000014422"/>
<dbReference type="GeneID" id="281126"/>
<dbReference type="KEGG" id="bta:281126"/>
<dbReference type="CTD" id="1813"/>
<dbReference type="eggNOG" id="KOG3656">
    <property type="taxonomic scope" value="Eukaryota"/>
</dbReference>
<dbReference type="InParanoid" id="P20288"/>
<dbReference type="OrthoDB" id="10034726at2759"/>
<dbReference type="Proteomes" id="UP000009136">
    <property type="component" value="Unplaced"/>
</dbReference>
<dbReference type="GO" id="GO:0098978">
    <property type="term" value="C:glutamatergic synapse"/>
    <property type="evidence" value="ECO:0000318"/>
    <property type="project" value="GO_Central"/>
</dbReference>
<dbReference type="GO" id="GO:0000139">
    <property type="term" value="C:Golgi membrane"/>
    <property type="evidence" value="ECO:0007669"/>
    <property type="project" value="UniProtKB-SubCell"/>
</dbReference>
<dbReference type="GO" id="GO:0005886">
    <property type="term" value="C:plasma membrane"/>
    <property type="evidence" value="ECO:0000318"/>
    <property type="project" value="GO_Central"/>
</dbReference>
<dbReference type="GO" id="GO:0042734">
    <property type="term" value="C:presynaptic membrane"/>
    <property type="evidence" value="ECO:0000318"/>
    <property type="project" value="GO_Central"/>
</dbReference>
<dbReference type="GO" id="GO:0001591">
    <property type="term" value="F:dopamine neurotransmitter receptor activity, coupled via Gi/Go"/>
    <property type="evidence" value="ECO:0000318"/>
    <property type="project" value="GO_Central"/>
</dbReference>
<dbReference type="GO" id="GO:0004930">
    <property type="term" value="F:G protein-coupled receptor activity"/>
    <property type="evidence" value="ECO:0000318"/>
    <property type="project" value="GO_Central"/>
</dbReference>
<dbReference type="GO" id="GO:0007195">
    <property type="term" value="P:adenylate cyclase-inhibiting dopamine receptor signaling pathway"/>
    <property type="evidence" value="ECO:0000318"/>
    <property type="project" value="GO_Central"/>
</dbReference>
<dbReference type="GO" id="GO:1990384">
    <property type="term" value="P:hyaloid vascular plexus regression"/>
    <property type="evidence" value="ECO:0000250"/>
    <property type="project" value="UniProtKB"/>
</dbReference>
<dbReference type="GO" id="GO:0051481">
    <property type="term" value="P:negative regulation of cytosolic calcium ion concentration"/>
    <property type="evidence" value="ECO:0000318"/>
    <property type="project" value="GO_Central"/>
</dbReference>
<dbReference type="GO" id="GO:1903488">
    <property type="term" value="P:negative regulation of lactation"/>
    <property type="evidence" value="ECO:0000315"/>
    <property type="project" value="AgBase"/>
</dbReference>
<dbReference type="GO" id="GO:1902721">
    <property type="term" value="P:negative regulation of prolactin secretion"/>
    <property type="evidence" value="ECO:0000315"/>
    <property type="project" value="AgBase"/>
</dbReference>
<dbReference type="GO" id="GO:0051967">
    <property type="term" value="P:negative regulation of synaptic transmission, glutamatergic"/>
    <property type="evidence" value="ECO:0000318"/>
    <property type="project" value="GO_Central"/>
</dbReference>
<dbReference type="GO" id="GO:0060158">
    <property type="term" value="P:phospholipase C-activating dopamine receptor signaling pathway"/>
    <property type="evidence" value="ECO:0000318"/>
    <property type="project" value="GO_Central"/>
</dbReference>
<dbReference type="GO" id="GO:1903521">
    <property type="term" value="P:positive regulation of mammary gland involution"/>
    <property type="evidence" value="ECO:0000315"/>
    <property type="project" value="AgBase"/>
</dbReference>
<dbReference type="GO" id="GO:0014059">
    <property type="term" value="P:regulation of dopamine secretion"/>
    <property type="evidence" value="ECO:0000318"/>
    <property type="project" value="GO_Central"/>
</dbReference>
<dbReference type="GO" id="GO:0043266">
    <property type="term" value="P:regulation of potassium ion transport"/>
    <property type="evidence" value="ECO:0000318"/>
    <property type="project" value="GO_Central"/>
</dbReference>
<dbReference type="CDD" id="cd15309">
    <property type="entry name" value="7tmA_D2_dopamine_R"/>
    <property type="match status" value="1"/>
</dbReference>
<dbReference type="FunFam" id="1.20.1070.10:FF:000099">
    <property type="entry name" value="D(2) dopamine receptor"/>
    <property type="match status" value="1"/>
</dbReference>
<dbReference type="FunFam" id="1.20.1070.10:FF:000086">
    <property type="entry name" value="Dopamine D2 receptor 2"/>
    <property type="match status" value="1"/>
</dbReference>
<dbReference type="Gene3D" id="1.20.1070.10">
    <property type="entry name" value="Rhodopsin 7-helix transmembrane proteins"/>
    <property type="match status" value="2"/>
</dbReference>
<dbReference type="InterPro" id="IPR001922">
    <property type="entry name" value="Dopamine_D2_rcpt"/>
</dbReference>
<dbReference type="InterPro" id="IPR000929">
    <property type="entry name" value="Dopamine_rcpt"/>
</dbReference>
<dbReference type="InterPro" id="IPR000276">
    <property type="entry name" value="GPCR_Rhodpsn"/>
</dbReference>
<dbReference type="InterPro" id="IPR017452">
    <property type="entry name" value="GPCR_Rhodpsn_7TM"/>
</dbReference>
<dbReference type="PANTHER" id="PTHR24248">
    <property type="entry name" value="ADRENERGIC RECEPTOR-RELATED G-PROTEIN COUPLED RECEPTOR"/>
    <property type="match status" value="1"/>
</dbReference>
<dbReference type="PANTHER" id="PTHR24248:SF87">
    <property type="entry name" value="D(2) DOPAMINE RECEPTOR"/>
    <property type="match status" value="1"/>
</dbReference>
<dbReference type="Pfam" id="PF00001">
    <property type="entry name" value="7tm_1"/>
    <property type="match status" value="1"/>
</dbReference>
<dbReference type="PRINTS" id="PR00567">
    <property type="entry name" value="DOPAMINED2R"/>
</dbReference>
<dbReference type="PRINTS" id="PR00242">
    <property type="entry name" value="DOPAMINER"/>
</dbReference>
<dbReference type="PRINTS" id="PR00237">
    <property type="entry name" value="GPCRRHODOPSN"/>
</dbReference>
<dbReference type="SMART" id="SM01381">
    <property type="entry name" value="7TM_GPCR_Srsx"/>
    <property type="match status" value="1"/>
</dbReference>
<dbReference type="SUPFAM" id="SSF81321">
    <property type="entry name" value="Family A G protein-coupled receptor-like"/>
    <property type="match status" value="1"/>
</dbReference>
<dbReference type="PROSITE" id="PS00237">
    <property type="entry name" value="G_PROTEIN_RECEP_F1_1"/>
    <property type="match status" value="1"/>
</dbReference>
<dbReference type="PROSITE" id="PS50262">
    <property type="entry name" value="G_PROTEIN_RECEP_F1_2"/>
    <property type="match status" value="1"/>
</dbReference>
<keyword id="KW-0025">Alternative splicing</keyword>
<keyword id="KW-1003">Cell membrane</keyword>
<keyword id="KW-1015">Disulfide bond</keyword>
<keyword id="KW-0297">G-protein coupled receptor</keyword>
<keyword id="KW-0325">Glycoprotein</keyword>
<keyword id="KW-0333">Golgi apparatus</keyword>
<keyword id="KW-0449">Lipoprotein</keyword>
<keyword id="KW-0472">Membrane</keyword>
<keyword id="KW-0564">Palmitate</keyword>
<keyword id="KW-0675">Receptor</keyword>
<keyword id="KW-1185">Reference proteome</keyword>
<keyword id="KW-0807">Transducer</keyword>
<keyword id="KW-0812">Transmembrane</keyword>
<keyword id="KW-1133">Transmembrane helix</keyword>
<sequence>MDPLNLSWYDDDPESRNWSRPFNGSEGKADRPPYNYYAMLLTLLIFVIVFGNVLVCMAVSREKALQTTTNYLIVSLAVADLLVATLVMPWVVYLEVVGEWKFSRIHCDIFVTLDVMMCTASILNLCAISIDRYTAVAMPMLYNTRYSSKRRVTVMIAIVWVLSFTISCPMLFGLNNTDQNECIIANPAFVVYSSIVSFYVPFIVTLLVYIKIYIVLRRRRKRVNTKRSSRAFRANLKAPLKGNCTHPEDMKLCTVIMKSNGSFPVNRRRVEAARRAQELEMEMLSSTSPPERTRYSPIPPSHHQLTLPDPSHHGLHSTPDSPAKPEKNGHAKTVNPKIAKIFEIQSMPNGKTRTSLKTMSRRKLSQQKEKKATQMLAIVLGVFIICWLPFFITHILNIHCDCNIPPVLYSAFTWLGYVNSAVNPIIYTTFNIEFRKAFLKILHC</sequence>
<gene>
    <name type="primary">DRD2</name>
</gene>
<accession>P20288</accession>
<feature type="chain" id="PRO_0000069384" description="D(2) dopamine receptor">
    <location>
        <begin position="1"/>
        <end position="444"/>
    </location>
</feature>
<feature type="topological domain" description="Extracellular" evidence="1">
    <location>
        <begin position="1"/>
        <end position="37"/>
    </location>
</feature>
<feature type="transmembrane region" description="Helical; Name=1" evidence="1">
    <location>
        <begin position="38"/>
        <end position="60"/>
    </location>
</feature>
<feature type="topological domain" description="Cytoplasmic" evidence="1">
    <location>
        <begin position="61"/>
        <end position="70"/>
    </location>
</feature>
<feature type="transmembrane region" description="Helical; Name=2" evidence="1">
    <location>
        <begin position="71"/>
        <end position="93"/>
    </location>
</feature>
<feature type="topological domain" description="Extracellular" evidence="1">
    <location>
        <begin position="94"/>
        <end position="108"/>
    </location>
</feature>
<feature type="transmembrane region" description="Helical; Name=3" evidence="1">
    <location>
        <begin position="109"/>
        <end position="130"/>
    </location>
</feature>
<feature type="topological domain" description="Cytoplasmic" evidence="1">
    <location>
        <begin position="131"/>
        <end position="151"/>
    </location>
</feature>
<feature type="transmembrane region" description="Helical; Name=4" evidence="1">
    <location>
        <begin position="152"/>
        <end position="172"/>
    </location>
</feature>
<feature type="topological domain" description="Extracellular" evidence="1">
    <location>
        <begin position="173"/>
        <end position="188"/>
    </location>
</feature>
<feature type="transmembrane region" description="Helical; Name=5" evidence="1">
    <location>
        <begin position="189"/>
        <end position="213"/>
    </location>
</feature>
<feature type="topological domain" description="Cytoplasmic" evidence="1">
    <location>
        <begin position="214"/>
        <end position="374"/>
    </location>
</feature>
<feature type="transmembrane region" description="Helical; Name=6" evidence="1">
    <location>
        <begin position="375"/>
        <end position="396"/>
    </location>
</feature>
<feature type="topological domain" description="Extracellular" evidence="1">
    <location>
        <begin position="397"/>
        <end position="410"/>
    </location>
</feature>
<feature type="transmembrane region" description="Helical; Name=7" evidence="1">
    <location>
        <begin position="411"/>
        <end position="432"/>
    </location>
</feature>
<feature type="topological domain" description="Cytoplasmic" evidence="1">
    <location>
        <begin position="433"/>
        <end position="444"/>
    </location>
</feature>
<feature type="region of interest" description="Interaction with PPP1R9B" evidence="1">
    <location>
        <begin position="211"/>
        <end position="374"/>
    </location>
</feature>
<feature type="region of interest" description="Disordered" evidence="7">
    <location>
        <begin position="281"/>
        <end position="332"/>
    </location>
</feature>
<feature type="site" description="Important for in receptor activation" evidence="1">
    <location>
        <position position="194"/>
    </location>
</feature>
<feature type="site" description="Important for receptor activation" evidence="1">
    <location>
        <position position="197"/>
    </location>
</feature>
<feature type="lipid moiety-binding region" description="S-palmitoyl cysteine" evidence="2">
    <location>
        <position position="444"/>
    </location>
</feature>
<feature type="glycosylation site" description="N-linked (GlcNAc...) asparagine" evidence="5">
    <location>
        <position position="5"/>
    </location>
</feature>
<feature type="glycosylation site" description="N-linked (GlcNAc...) asparagine" evidence="5">
    <location>
        <position position="17"/>
    </location>
</feature>
<feature type="glycosylation site" description="N-linked (GlcNAc...) asparagine" evidence="5">
    <location>
        <position position="23"/>
    </location>
</feature>
<feature type="disulfide bond" evidence="6">
    <location>
        <begin position="107"/>
        <end position="182"/>
    </location>
</feature>
<feature type="disulfide bond" evidence="6">
    <location>
        <begin position="400"/>
        <end position="402"/>
    </location>
</feature>
<feature type="splice variant" id="VSP_001869" description="In isoform Short." evidence="8">
    <location>
        <begin position="242"/>
        <end position="270"/>
    </location>
</feature>
<reference key="1">
    <citation type="journal article" date="1990" name="Nature">
        <title>A second molecular form of D2 dopamine receptor in rat and bovine caudate nucleus.</title>
        <authorList>
            <person name="Chio C.L."/>
            <person name="Hess G.F."/>
            <person name="Graham R.S."/>
            <person name="Huff R.M."/>
        </authorList>
    </citation>
    <scope>NUCLEOTIDE SEQUENCE [MRNA] (ISOFORMS LONG AND SHORT)</scope>
</reference>
<proteinExistence type="evidence at transcript level"/>
<name>DRD2_BOVIN</name>